<evidence type="ECO:0000255" key="1"/>
<evidence type="ECO:0000255" key="2">
    <source>
        <dbReference type="PROSITE-ProRule" id="PRU00159"/>
    </source>
</evidence>
<evidence type="ECO:0000255" key="3">
    <source>
        <dbReference type="PROSITE-ProRule" id="PRU10027"/>
    </source>
</evidence>
<evidence type="ECO:0000305" key="4"/>
<proteinExistence type="inferred from homology"/>
<feature type="signal peptide" evidence="1">
    <location>
        <begin position="1"/>
        <end position="28"/>
    </location>
</feature>
<feature type="chain" id="PRO_0000386553" description="Probable receptor-like protein kinase At2g23200">
    <location>
        <begin position="29"/>
        <end position="834"/>
    </location>
</feature>
<feature type="topological domain" description="Extracellular" evidence="1">
    <location>
        <begin position="29"/>
        <end position="405"/>
    </location>
</feature>
<feature type="transmembrane region" description="Helical" evidence="1">
    <location>
        <begin position="406"/>
        <end position="426"/>
    </location>
</feature>
<feature type="topological domain" description="Cytoplasmic" evidence="1">
    <location>
        <begin position="427"/>
        <end position="834"/>
    </location>
</feature>
<feature type="domain" description="Protein kinase" evidence="2">
    <location>
        <begin position="488"/>
        <end position="761"/>
    </location>
</feature>
<feature type="active site" description="Proton acceptor" evidence="2 3">
    <location>
        <position position="613"/>
    </location>
</feature>
<feature type="binding site" evidence="2">
    <location>
        <begin position="494"/>
        <end position="502"/>
    </location>
    <ligand>
        <name>ATP</name>
        <dbReference type="ChEBI" id="CHEBI:30616"/>
    </ligand>
</feature>
<feature type="binding site" evidence="2">
    <location>
        <position position="516"/>
    </location>
    <ligand>
        <name>ATP</name>
        <dbReference type="ChEBI" id="CHEBI:30616"/>
    </ligand>
</feature>
<feature type="glycosylation site" description="N-linked (GlcNAc...) asparagine" evidence="1">
    <location>
        <position position="61"/>
    </location>
</feature>
<feature type="glycosylation site" description="N-linked (GlcNAc...) asparagine" evidence="1">
    <location>
        <position position="149"/>
    </location>
</feature>
<feature type="glycosylation site" description="N-linked (GlcNAc...) asparagine" evidence="1">
    <location>
        <position position="221"/>
    </location>
</feature>
<feature type="glycosylation site" description="N-linked (GlcNAc...) asparagine" evidence="1">
    <location>
        <position position="246"/>
    </location>
</feature>
<feature type="glycosylation site" description="N-linked (GlcNAc...) asparagine" evidence="1">
    <location>
        <position position="277"/>
    </location>
</feature>
<feature type="glycosylation site" description="N-linked (GlcNAc...) asparagine" evidence="1">
    <location>
        <position position="289"/>
    </location>
</feature>
<feature type="glycosylation site" description="N-linked (GlcNAc...) asparagine" evidence="1">
    <location>
        <position position="314"/>
    </location>
</feature>
<feature type="glycosylation site" description="N-linked (GlcNAc...) asparagine" evidence="1">
    <location>
        <position position="352"/>
    </location>
</feature>
<feature type="glycosylation site" description="N-linked (GlcNAc...) asparagine" evidence="1">
    <location>
        <position position="361"/>
    </location>
</feature>
<feature type="glycosylation site" description="N-linked (GlcNAc...) asparagine" evidence="1">
    <location>
        <position position="394"/>
    </location>
</feature>
<sequence length="834" mass="93379">MENFCFQDSVSLFITIMVLVLLPRLSLSDTSTYTRPENFYVNCGSDSNVFYGGQTFVGDTNSSTNSVSFTNKGTEVINDQSSVAPEIYRTVRIFRHPSSYKFKLDSLGLHFVRLHFSVVFSRADLLTARFTVSATSGSNHHLKSFSPQNLTNTPRVEEFLLMMNSLEFEIRFVPDHSSLALINAIEVFSAPDDLEIPSASDKNLHTIYRLNVGGEKITPDNDTLGRTWLPDDDDFLYRKDSARNINSTQTPNYVGGLSSATDSTAPDFVYKTAKAMNRSSNEQVGMLMNVTWSFKVKSNHRHFIRIHFSDILSNLSNSDSDFYLFVNGYWRVDVKPSEQPRLASPFFKDVVNVSDGSGLLNISIGTKEANKDAGFLNGLEMMEVLSKSGSDYSNRSSSRVHIITGCAVAAAAASALVFSLLFMVFLKRRRSKKTKPEVEGTVWSPLPLHRGGSSDNRPISQYHNSPLRNLHLGLTIPFTDILSATNNFDEQLLIGKGGFGYVYKAILPDGTKAAIKRGKTGSGQGILEFQTEIQVLSRIRHRHLVSLTGYCEENSEMILVYEFMEKGTLKEHLYGSNLPSLTWKQRLEICIGAARGLDYLHSSGSEGAIIHRDVKSTNILLDEHNIAKVADFGLSKIHNQDESNISINIKGTFGYLDPEYLQTHKLTEKSDVYAFGVVLLEVLFARPAIDPYLPHEEVNLSEWVMFCKSKGTIDEILDPSLIGQIETNSLKKFMEIAEKCLKEYGDERPSMRDVIWDLEYVLQLQMMTNRREAHEEDSTAINSGGSLVAPRLMVSDSFSTNSIFQNGDESKNRFGFTDSSETRVFSQLKISDAR</sequence>
<name>Y2232_ARATH</name>
<dbReference type="EC" id="2.7.11.-"/>
<dbReference type="EMBL" id="AC002391">
    <property type="protein sequence ID" value="AAB87113.1"/>
    <property type="molecule type" value="Genomic_DNA"/>
</dbReference>
<dbReference type="EMBL" id="CP002685">
    <property type="protein sequence ID" value="AEC07428.1"/>
    <property type="molecule type" value="Genomic_DNA"/>
</dbReference>
<dbReference type="PIR" id="T00512">
    <property type="entry name" value="T00512"/>
</dbReference>
<dbReference type="RefSeq" id="NP_179901.1">
    <property type="nucleotide sequence ID" value="NM_127884.4"/>
</dbReference>
<dbReference type="SMR" id="O22187"/>
<dbReference type="BioGRID" id="2205">
    <property type="interactions" value="2"/>
</dbReference>
<dbReference type="FunCoup" id="O22187">
    <property type="interactions" value="99"/>
</dbReference>
<dbReference type="IntAct" id="O22187">
    <property type="interactions" value="2"/>
</dbReference>
<dbReference type="STRING" id="3702.O22187"/>
<dbReference type="GlyGen" id="O22187">
    <property type="glycosylation" value="10 sites"/>
</dbReference>
<dbReference type="iPTMnet" id="O22187"/>
<dbReference type="PaxDb" id="3702-AT2G23200.1"/>
<dbReference type="ProteomicsDB" id="243060"/>
<dbReference type="EnsemblPlants" id="AT2G23200.1">
    <property type="protein sequence ID" value="AT2G23200.1"/>
    <property type="gene ID" value="AT2G23200"/>
</dbReference>
<dbReference type="GeneID" id="816852"/>
<dbReference type="Gramene" id="AT2G23200.1">
    <property type="protein sequence ID" value="AT2G23200.1"/>
    <property type="gene ID" value="AT2G23200"/>
</dbReference>
<dbReference type="KEGG" id="ath:AT2G23200"/>
<dbReference type="Araport" id="AT2G23200"/>
<dbReference type="TAIR" id="AT2G23200"/>
<dbReference type="eggNOG" id="KOG1187">
    <property type="taxonomic scope" value="Eukaryota"/>
</dbReference>
<dbReference type="HOGENOM" id="CLU_000288_42_1_1"/>
<dbReference type="InParanoid" id="O22187"/>
<dbReference type="OMA" id="HFCAFEE"/>
<dbReference type="PhylomeDB" id="O22187"/>
<dbReference type="PRO" id="PR:O22187"/>
<dbReference type="Proteomes" id="UP000006548">
    <property type="component" value="Chromosome 2"/>
</dbReference>
<dbReference type="ExpressionAtlas" id="O22187">
    <property type="expression patterns" value="baseline and differential"/>
</dbReference>
<dbReference type="GO" id="GO:0016020">
    <property type="term" value="C:membrane"/>
    <property type="evidence" value="ECO:0007669"/>
    <property type="project" value="UniProtKB-SubCell"/>
</dbReference>
<dbReference type="GO" id="GO:0005773">
    <property type="term" value="C:vacuole"/>
    <property type="evidence" value="ECO:0007005"/>
    <property type="project" value="TAIR"/>
</dbReference>
<dbReference type="GO" id="GO:0005524">
    <property type="term" value="F:ATP binding"/>
    <property type="evidence" value="ECO:0007669"/>
    <property type="project" value="UniProtKB-KW"/>
</dbReference>
<dbReference type="GO" id="GO:0004674">
    <property type="term" value="F:protein serine/threonine kinase activity"/>
    <property type="evidence" value="ECO:0007669"/>
    <property type="project" value="UniProtKB-KW"/>
</dbReference>
<dbReference type="GO" id="GO:0004714">
    <property type="term" value="F:transmembrane receptor protein tyrosine kinase activity"/>
    <property type="evidence" value="ECO:0007669"/>
    <property type="project" value="InterPro"/>
</dbReference>
<dbReference type="CDD" id="cd14066">
    <property type="entry name" value="STKc_IRAK"/>
    <property type="match status" value="1"/>
</dbReference>
<dbReference type="FunFam" id="2.60.120.430:FF:000013">
    <property type="entry name" value="Putative receptor-like protein kinase"/>
    <property type="match status" value="1"/>
</dbReference>
<dbReference type="FunFam" id="1.10.510.10:FF:000252">
    <property type="entry name" value="Receptor-like protein kinase FERONIA"/>
    <property type="match status" value="1"/>
</dbReference>
<dbReference type="FunFam" id="3.30.200.20:FF:000039">
    <property type="entry name" value="receptor-like protein kinase FERONIA"/>
    <property type="match status" value="1"/>
</dbReference>
<dbReference type="Gene3D" id="2.60.120.430">
    <property type="entry name" value="Galactose-binding lectin"/>
    <property type="match status" value="2"/>
</dbReference>
<dbReference type="Gene3D" id="3.30.200.20">
    <property type="entry name" value="Phosphorylase Kinase, domain 1"/>
    <property type="match status" value="1"/>
</dbReference>
<dbReference type="Gene3D" id="1.10.510.10">
    <property type="entry name" value="Transferase(Phosphotransferase) domain 1"/>
    <property type="match status" value="1"/>
</dbReference>
<dbReference type="InterPro" id="IPR045272">
    <property type="entry name" value="ANXUR1/2-like"/>
</dbReference>
<dbReference type="InterPro" id="IPR011009">
    <property type="entry name" value="Kinase-like_dom_sf"/>
</dbReference>
<dbReference type="InterPro" id="IPR024788">
    <property type="entry name" value="Malectin-like_Carb-bd_dom"/>
</dbReference>
<dbReference type="InterPro" id="IPR000719">
    <property type="entry name" value="Prot_kinase_dom"/>
</dbReference>
<dbReference type="InterPro" id="IPR017441">
    <property type="entry name" value="Protein_kinase_ATP_BS"/>
</dbReference>
<dbReference type="InterPro" id="IPR001245">
    <property type="entry name" value="Ser-Thr/Tyr_kinase_cat_dom"/>
</dbReference>
<dbReference type="InterPro" id="IPR008271">
    <property type="entry name" value="Ser/Thr_kinase_AS"/>
</dbReference>
<dbReference type="PANTHER" id="PTHR27003">
    <property type="entry name" value="OS07G0166700 PROTEIN"/>
    <property type="match status" value="1"/>
</dbReference>
<dbReference type="PANTHER" id="PTHR27003:SF398">
    <property type="entry name" value="PROTEIN KINASE DOMAIN-CONTAINING PROTEIN"/>
    <property type="match status" value="1"/>
</dbReference>
<dbReference type="Pfam" id="PF12819">
    <property type="entry name" value="Malectin_like"/>
    <property type="match status" value="1"/>
</dbReference>
<dbReference type="Pfam" id="PF07714">
    <property type="entry name" value="PK_Tyr_Ser-Thr"/>
    <property type="match status" value="1"/>
</dbReference>
<dbReference type="SMART" id="SM00220">
    <property type="entry name" value="S_TKc"/>
    <property type="match status" value="1"/>
</dbReference>
<dbReference type="SUPFAM" id="SSF56112">
    <property type="entry name" value="Protein kinase-like (PK-like)"/>
    <property type="match status" value="1"/>
</dbReference>
<dbReference type="PROSITE" id="PS00107">
    <property type="entry name" value="PROTEIN_KINASE_ATP"/>
    <property type="match status" value="1"/>
</dbReference>
<dbReference type="PROSITE" id="PS50011">
    <property type="entry name" value="PROTEIN_KINASE_DOM"/>
    <property type="match status" value="1"/>
</dbReference>
<dbReference type="PROSITE" id="PS00108">
    <property type="entry name" value="PROTEIN_KINASE_ST"/>
    <property type="match status" value="1"/>
</dbReference>
<keyword id="KW-0067">ATP-binding</keyword>
<keyword id="KW-0325">Glycoprotein</keyword>
<keyword id="KW-0418">Kinase</keyword>
<keyword id="KW-0472">Membrane</keyword>
<keyword id="KW-0547">Nucleotide-binding</keyword>
<keyword id="KW-1185">Reference proteome</keyword>
<keyword id="KW-0723">Serine/threonine-protein kinase</keyword>
<keyword id="KW-0732">Signal</keyword>
<keyword id="KW-0808">Transferase</keyword>
<keyword id="KW-0812">Transmembrane</keyword>
<keyword id="KW-1133">Transmembrane helix</keyword>
<organism>
    <name type="scientific">Arabidopsis thaliana</name>
    <name type="common">Mouse-ear cress</name>
    <dbReference type="NCBI Taxonomy" id="3702"/>
    <lineage>
        <taxon>Eukaryota</taxon>
        <taxon>Viridiplantae</taxon>
        <taxon>Streptophyta</taxon>
        <taxon>Embryophyta</taxon>
        <taxon>Tracheophyta</taxon>
        <taxon>Spermatophyta</taxon>
        <taxon>Magnoliopsida</taxon>
        <taxon>eudicotyledons</taxon>
        <taxon>Gunneridae</taxon>
        <taxon>Pentapetalae</taxon>
        <taxon>rosids</taxon>
        <taxon>malvids</taxon>
        <taxon>Brassicales</taxon>
        <taxon>Brassicaceae</taxon>
        <taxon>Camelineae</taxon>
        <taxon>Arabidopsis</taxon>
    </lineage>
</organism>
<accession>O22187</accession>
<protein>
    <recommendedName>
        <fullName>Probable receptor-like protein kinase At2g23200</fullName>
        <ecNumber>2.7.11.-</ecNumber>
    </recommendedName>
</protein>
<gene>
    <name type="ordered locus">At2g23200</name>
    <name type="ORF">T20D16.17</name>
</gene>
<comment type="subcellular location">
    <subcellularLocation>
        <location evidence="4">Membrane</location>
        <topology evidence="4">Single-pass type I membrane protein</topology>
    </subcellularLocation>
</comment>
<comment type="similarity">
    <text evidence="2">Belongs to the protein kinase superfamily. Ser/Thr protein kinase family.</text>
</comment>
<reference key="1">
    <citation type="journal article" date="1999" name="Nature">
        <title>Sequence and analysis of chromosome 2 of the plant Arabidopsis thaliana.</title>
        <authorList>
            <person name="Lin X."/>
            <person name="Kaul S."/>
            <person name="Rounsley S.D."/>
            <person name="Shea T.P."/>
            <person name="Benito M.-I."/>
            <person name="Town C.D."/>
            <person name="Fujii C.Y."/>
            <person name="Mason T.M."/>
            <person name="Bowman C.L."/>
            <person name="Barnstead M.E."/>
            <person name="Feldblyum T.V."/>
            <person name="Buell C.R."/>
            <person name="Ketchum K.A."/>
            <person name="Lee J.J."/>
            <person name="Ronning C.M."/>
            <person name="Koo H.L."/>
            <person name="Moffat K.S."/>
            <person name="Cronin L.A."/>
            <person name="Shen M."/>
            <person name="Pai G."/>
            <person name="Van Aken S."/>
            <person name="Umayam L."/>
            <person name="Tallon L.J."/>
            <person name="Gill J.E."/>
            <person name="Adams M.D."/>
            <person name="Carrera A.J."/>
            <person name="Creasy T.H."/>
            <person name="Goodman H.M."/>
            <person name="Somerville C.R."/>
            <person name="Copenhaver G.P."/>
            <person name="Preuss D."/>
            <person name="Nierman W.C."/>
            <person name="White O."/>
            <person name="Eisen J.A."/>
            <person name="Salzberg S.L."/>
            <person name="Fraser C.M."/>
            <person name="Venter J.C."/>
        </authorList>
    </citation>
    <scope>NUCLEOTIDE SEQUENCE [LARGE SCALE GENOMIC DNA]</scope>
    <source>
        <strain>cv. Columbia</strain>
    </source>
</reference>
<reference key="2">
    <citation type="journal article" date="2017" name="Plant J.">
        <title>Araport11: a complete reannotation of the Arabidopsis thaliana reference genome.</title>
        <authorList>
            <person name="Cheng C.Y."/>
            <person name="Krishnakumar V."/>
            <person name="Chan A.P."/>
            <person name="Thibaud-Nissen F."/>
            <person name="Schobel S."/>
            <person name="Town C.D."/>
        </authorList>
    </citation>
    <scope>GENOME REANNOTATION</scope>
    <source>
        <strain>cv. Columbia</strain>
    </source>
</reference>
<reference key="3">
    <citation type="journal article" date="2009" name="Mol. Plant">
        <title>Diverse transcriptional programs associated with environmental stress and hormones in the Arabidopsis receptor-like kinase gene family.</title>
        <authorList>
            <person name="Chae L."/>
            <person name="Sudat S."/>
            <person name="Dudoit S."/>
            <person name="Zhu T."/>
            <person name="Luan S."/>
        </authorList>
    </citation>
    <scope>GENE FAMILY</scope>
</reference>